<gene>
    <name type="primary">Lpcat2</name>
    <name type="synonym">Aytl1</name>
    <name type="synonym">Aytl1a</name>
    <name type="synonym">Lpcat2a</name>
</gene>
<comment type="function">
    <text evidence="3 4">Exhibits both acyltransferase and acetyltransferase activities (By similarity). Activity is calcium-dependent (By similarity). Catalyzes the conversion of lysophosphatidylcholine (1-acyl-sn-glycero-3-phosphocholine or LPC) into phosphatidylcholine (1,2-diacyl-sn-glycero-3-phosphocholine or PC) (By similarity). Catalyzes the conversion 1-acyl-sn-glycerol-3-phosphate (lysophosphatidic acid or LPA) into 1,2-diacyl-sn-glycerol-3-phosphate (phosphatidic acid or PA) by incorporating an acyl moiety at the sn-2 position of the glycerol backbone (By similarity). Involved in platelet-activating factor (PAF) biosynthesis by catalyzing the conversion of the PAF precursor, 1-O-alkyl-sn-glycero-3-phosphocholine (lyso-PAF) into 1-O-alkyl-2-acetyl-sn-glycero-3-phosphocholine (PAF) (By similarity). Also converts lyso-PAF to 1-O-alkyl-2-acyl-sn-glycero-3-phosphocholine (PC), a major component of cell membranes and a PAF precursor (By similarity). Under resting conditions, acyltransferase activity is preferred (By similarity). Upon acute inflammatory stimulus, acetyltransferase activity is enhanced and PAF synthesis increases (By similarity). Involved in the regulation of lipid droplet number and size (By similarity).</text>
</comment>
<comment type="catalytic activity">
    <reaction evidence="2">
        <text>a 1-acyl-sn-glycero-3-phosphocholine + an acyl-CoA = a 1,2-diacyl-sn-glycero-3-phosphocholine + CoA</text>
        <dbReference type="Rhea" id="RHEA:12937"/>
        <dbReference type="ChEBI" id="CHEBI:57287"/>
        <dbReference type="ChEBI" id="CHEBI:57643"/>
        <dbReference type="ChEBI" id="CHEBI:58168"/>
        <dbReference type="ChEBI" id="CHEBI:58342"/>
        <dbReference type="EC" id="2.3.1.23"/>
    </reaction>
</comment>
<comment type="catalytic activity">
    <reaction evidence="3">
        <text>a 1-O-alkyl-sn-glycero-3-phosphocholine + acetyl-CoA = a 1-O-alkyl-2-acetyl-sn-glycero-3-phosphocholine + CoA</text>
        <dbReference type="Rhea" id="RHEA:18461"/>
        <dbReference type="ChEBI" id="CHEBI:30909"/>
        <dbReference type="ChEBI" id="CHEBI:36707"/>
        <dbReference type="ChEBI" id="CHEBI:57287"/>
        <dbReference type="ChEBI" id="CHEBI:57288"/>
        <dbReference type="EC" id="2.3.1.67"/>
    </reaction>
</comment>
<comment type="catalytic activity">
    <reaction evidence="2">
        <text>a 1-acyl-sn-glycero-3-phosphate + an acyl-CoA = a 1,2-diacyl-sn-glycero-3-phosphate + CoA</text>
        <dbReference type="Rhea" id="RHEA:19709"/>
        <dbReference type="ChEBI" id="CHEBI:57287"/>
        <dbReference type="ChEBI" id="CHEBI:57970"/>
        <dbReference type="ChEBI" id="CHEBI:58342"/>
        <dbReference type="ChEBI" id="CHEBI:58608"/>
        <dbReference type="EC" id="2.3.1.51"/>
    </reaction>
</comment>
<comment type="catalytic activity">
    <reaction evidence="3">
        <text>a 1-O-(1Z-alkenyl)-sn-glycero-3-phosphocholine + an acyl-CoA = a 1-O-(1Z-alkenyl)-2-acyl-sn-glycero-3-phosphocholine + CoA</text>
        <dbReference type="Rhea" id="RHEA:10344"/>
        <dbReference type="ChEBI" id="CHEBI:57287"/>
        <dbReference type="ChEBI" id="CHEBI:58342"/>
        <dbReference type="ChEBI" id="CHEBI:77286"/>
        <dbReference type="ChEBI" id="CHEBI:77287"/>
        <dbReference type="EC" id="2.3.1.25"/>
    </reaction>
</comment>
<comment type="catalytic activity">
    <reaction evidence="2">
        <text>1-hexadecanoyl-sn-glycero-3-phosphate + (9Z)-octadecenoyl-CoA = 1-hexadecanoyl-2-(9Z-octadecenoyl)-sn-glycero-3-phosphate + CoA</text>
        <dbReference type="Rhea" id="RHEA:33187"/>
        <dbReference type="ChEBI" id="CHEBI:57287"/>
        <dbReference type="ChEBI" id="CHEBI:57387"/>
        <dbReference type="ChEBI" id="CHEBI:57518"/>
        <dbReference type="ChEBI" id="CHEBI:64839"/>
    </reaction>
    <physiologicalReaction direction="left-to-right" evidence="2">
        <dbReference type="Rhea" id="RHEA:33188"/>
    </physiologicalReaction>
</comment>
<comment type="catalytic activity">
    <reaction evidence="2">
        <text>1-(9Z-octadecenoyl)-sn-glycero-3-phosphate + (9Z)-octadecenoyl-CoA = 1,2-di-(9Z-octadecenoyl)-sn-glycero-3-phosphate + CoA</text>
        <dbReference type="Rhea" id="RHEA:37131"/>
        <dbReference type="ChEBI" id="CHEBI:57287"/>
        <dbReference type="ChEBI" id="CHEBI:57387"/>
        <dbReference type="ChEBI" id="CHEBI:74544"/>
        <dbReference type="ChEBI" id="CHEBI:74546"/>
    </reaction>
    <physiologicalReaction direction="left-to-right" evidence="2">
        <dbReference type="Rhea" id="RHEA:37132"/>
    </physiologicalReaction>
</comment>
<comment type="catalytic activity">
    <reaction evidence="2">
        <text>1-(9Z-octadecenoyl)-sn-glycero-3-phosphate + hexadecanoyl-CoA = 1-(9Z)-octadecenoyl-2-hexadecanoyl-sn-glycero-3-phosphate + CoA</text>
        <dbReference type="Rhea" id="RHEA:37143"/>
        <dbReference type="ChEBI" id="CHEBI:57287"/>
        <dbReference type="ChEBI" id="CHEBI:57379"/>
        <dbReference type="ChEBI" id="CHEBI:74544"/>
        <dbReference type="ChEBI" id="CHEBI:74551"/>
    </reaction>
    <physiologicalReaction direction="left-to-right" evidence="2">
        <dbReference type="Rhea" id="RHEA:37144"/>
    </physiologicalReaction>
</comment>
<comment type="catalytic activity">
    <reaction evidence="2">
        <text>1-heptadecanoyl-sn-glycero-3-phosphate + (9Z)-octadecenoyl-CoA = 1-heptadecanoyl-2-(9Z)-octadecenoyl-sn-glycero-3-phosphate + CoA</text>
        <dbReference type="Rhea" id="RHEA:37151"/>
        <dbReference type="ChEBI" id="CHEBI:57287"/>
        <dbReference type="ChEBI" id="CHEBI:57387"/>
        <dbReference type="ChEBI" id="CHEBI:74554"/>
        <dbReference type="ChEBI" id="CHEBI:74556"/>
    </reaction>
    <physiologicalReaction direction="left-to-right" evidence="2">
        <dbReference type="Rhea" id="RHEA:37152"/>
    </physiologicalReaction>
</comment>
<comment type="catalytic activity">
    <reaction evidence="2">
        <text>1-octadecanoyl-sn-glycero-3-phosphate + (9Z)-octadecenoyl-CoA = 1-octadecanoyl-2-(9Z-octadecenoyl)-sn-glycero-3-phosphate + CoA</text>
        <dbReference type="Rhea" id="RHEA:37163"/>
        <dbReference type="ChEBI" id="CHEBI:57287"/>
        <dbReference type="ChEBI" id="CHEBI:57387"/>
        <dbReference type="ChEBI" id="CHEBI:74560"/>
        <dbReference type="ChEBI" id="CHEBI:74565"/>
    </reaction>
    <physiologicalReaction direction="left-to-right" evidence="2">
        <dbReference type="Rhea" id="RHEA:37164"/>
    </physiologicalReaction>
</comment>
<comment type="catalytic activity">
    <reaction evidence="2">
        <text>heptadecanoyl-CoA + 1-(9Z-octadecenoyl)-sn-glycero-3-phosphate = 1-(9Z)-octadecenoyl-2-heptadecanoyl-sn-glycero-3-phosphate + CoA</text>
        <dbReference type="Rhea" id="RHEA:37155"/>
        <dbReference type="ChEBI" id="CHEBI:57287"/>
        <dbReference type="ChEBI" id="CHEBI:74307"/>
        <dbReference type="ChEBI" id="CHEBI:74544"/>
        <dbReference type="ChEBI" id="CHEBI:74558"/>
    </reaction>
    <physiologicalReaction direction="left-to-right" evidence="2">
        <dbReference type="Rhea" id="RHEA:37156"/>
    </physiologicalReaction>
</comment>
<comment type="catalytic activity">
    <reaction evidence="2">
        <text>1-(9Z-octadecenoyl)-sn-glycero-3-phosphate + (9Z,12Z)-octadecadienoyl-CoA = 1-(9Z)-octadecenoyl-2-(9Z,12Z)-octadecadienoyl-sn-glycero-3-phosphate + CoA</text>
        <dbReference type="Rhea" id="RHEA:37159"/>
        <dbReference type="ChEBI" id="CHEBI:57287"/>
        <dbReference type="ChEBI" id="CHEBI:57383"/>
        <dbReference type="ChEBI" id="CHEBI:74544"/>
        <dbReference type="ChEBI" id="CHEBI:74563"/>
    </reaction>
    <physiologicalReaction direction="left-to-right" evidence="2">
        <dbReference type="Rhea" id="RHEA:37160"/>
    </physiologicalReaction>
</comment>
<comment type="catalytic activity">
    <reaction evidence="2">
        <text>1-(9Z-octadecenoyl)-sn-glycero-3-phosphate + tetradecanoyl-CoA = 1-(9Z)-octadecenoyl-2-tetradecanoyl-sn-glycero-3-phosphate + CoA</text>
        <dbReference type="Rhea" id="RHEA:37171"/>
        <dbReference type="ChEBI" id="CHEBI:57287"/>
        <dbReference type="ChEBI" id="CHEBI:57385"/>
        <dbReference type="ChEBI" id="CHEBI:74544"/>
        <dbReference type="ChEBI" id="CHEBI:74579"/>
    </reaction>
    <physiologicalReaction direction="left-to-right" evidence="2">
        <dbReference type="Rhea" id="RHEA:37172"/>
    </physiologicalReaction>
</comment>
<comment type="catalytic activity">
    <reaction evidence="2">
        <text>pentadecanoyl-CoA + 1-(9Z-octadecenoyl)-sn-glycero-3-phosphate = 1-(9Z)-octadecenoyl-2-pentadecanoyl-sn-glycero-3-phosphate + CoA</text>
        <dbReference type="Rhea" id="RHEA:37175"/>
        <dbReference type="ChEBI" id="CHEBI:57287"/>
        <dbReference type="ChEBI" id="CHEBI:74309"/>
        <dbReference type="ChEBI" id="CHEBI:74544"/>
        <dbReference type="ChEBI" id="CHEBI:74578"/>
    </reaction>
    <physiologicalReaction direction="left-to-right" evidence="2">
        <dbReference type="Rhea" id="RHEA:37176"/>
    </physiologicalReaction>
</comment>
<comment type="catalytic activity">
    <reaction evidence="2">
        <text>nonadecanoyl-CoA + 1-(9Z-octadecenoyl)-sn-glycero-3-phosphate = 1-(9Z)-octadecenoyl-2-nonadecanoyl-sn-glycero-3-phosphate + CoA</text>
        <dbReference type="Rhea" id="RHEA:37595"/>
        <dbReference type="ChEBI" id="CHEBI:57287"/>
        <dbReference type="ChEBI" id="CHEBI:74544"/>
        <dbReference type="ChEBI" id="CHEBI:75104"/>
        <dbReference type="ChEBI" id="CHEBI:75105"/>
    </reaction>
    <physiologicalReaction direction="left-to-right" evidence="2">
        <dbReference type="Rhea" id="RHEA:37596"/>
    </physiologicalReaction>
</comment>
<comment type="catalytic activity">
    <reaction evidence="2">
        <text>1-hexadecanoyl-sn-glycero-3-phosphocholine + (9Z)-octadecenoyl-CoA = 1-hexadecanoyl-2-(9Z-octadecenoyl)-sn-glycero-3-phosphocholine + CoA</text>
        <dbReference type="Rhea" id="RHEA:35991"/>
        <dbReference type="ChEBI" id="CHEBI:57287"/>
        <dbReference type="ChEBI" id="CHEBI:57387"/>
        <dbReference type="ChEBI" id="CHEBI:72998"/>
        <dbReference type="ChEBI" id="CHEBI:73001"/>
    </reaction>
    <physiologicalReaction direction="left-to-right" evidence="2">
        <dbReference type="Rhea" id="RHEA:35992"/>
    </physiologicalReaction>
</comment>
<comment type="catalytic activity">
    <reaction evidence="3">
        <text>1-O-hexadecyl-sn-glycero-3-phosphocholine + acetyl-CoA = 1-O-hexadecyl-2-acetyl-sn-glycero-3-phosphocholine + CoA</text>
        <dbReference type="Rhea" id="RHEA:37719"/>
        <dbReference type="ChEBI" id="CHEBI:44811"/>
        <dbReference type="ChEBI" id="CHEBI:57287"/>
        <dbReference type="ChEBI" id="CHEBI:57288"/>
        <dbReference type="ChEBI" id="CHEBI:64496"/>
    </reaction>
    <physiologicalReaction direction="left-to-right" evidence="3">
        <dbReference type="Rhea" id="RHEA:37720"/>
    </physiologicalReaction>
</comment>
<comment type="catalytic activity">
    <reaction evidence="3">
        <text>1-O-octadecyl-sn-glycero-3-phosphocholine + acetyl-CoA = 1-O-octadecyl-2-acetyl-sn-glycero-3-phosphocholine + CoA</text>
        <dbReference type="Rhea" id="RHEA:37699"/>
        <dbReference type="ChEBI" id="CHEBI:52450"/>
        <dbReference type="ChEBI" id="CHEBI:57287"/>
        <dbReference type="ChEBI" id="CHEBI:57288"/>
        <dbReference type="ChEBI" id="CHEBI:75216"/>
    </reaction>
    <physiologicalReaction direction="left-to-right" evidence="3">
        <dbReference type="Rhea" id="RHEA:37700"/>
    </physiologicalReaction>
</comment>
<comment type="catalytic activity">
    <reaction evidence="3">
        <text>1-hexadecanoyl-sn-glycero-3-phosphocholine + acetyl-CoA = 1-hexadecanoyl-2-acetyl-sn-glycero-3-phosphocholine + CoA</text>
        <dbReference type="Rhea" id="RHEA:37703"/>
        <dbReference type="ChEBI" id="CHEBI:57287"/>
        <dbReference type="ChEBI" id="CHEBI:57288"/>
        <dbReference type="ChEBI" id="CHEBI:72998"/>
        <dbReference type="ChEBI" id="CHEBI:75219"/>
    </reaction>
    <physiologicalReaction direction="left-to-right" evidence="3">
        <dbReference type="Rhea" id="RHEA:37704"/>
    </physiologicalReaction>
</comment>
<comment type="catalytic activity">
    <reaction evidence="3">
        <text>1-octadecanoyl-sn-glycero-3-phosphocholine + acetyl-CoA = 1-octadecanoyl-2-acetyl-sn-glycero-3-phosphocholine + CoA</text>
        <dbReference type="Rhea" id="RHEA:37707"/>
        <dbReference type="ChEBI" id="CHEBI:57287"/>
        <dbReference type="ChEBI" id="CHEBI:57288"/>
        <dbReference type="ChEBI" id="CHEBI:73858"/>
        <dbReference type="ChEBI" id="CHEBI:75220"/>
    </reaction>
    <physiologicalReaction direction="left-to-right" evidence="3">
        <dbReference type="Rhea" id="RHEA:37708"/>
    </physiologicalReaction>
</comment>
<comment type="catalytic activity">
    <reaction evidence="3">
        <text>a 1-O-(1Z-alkenyl)-sn-glycero-3-phosphocholine + acetyl-CoA = 1-O-(1Z)-alkenyl-2-acetyl-sn-glycero-3-phosphocholine + CoA</text>
        <dbReference type="Rhea" id="RHEA:37711"/>
        <dbReference type="ChEBI" id="CHEBI:57287"/>
        <dbReference type="ChEBI" id="CHEBI:57288"/>
        <dbReference type="ChEBI" id="CHEBI:77287"/>
        <dbReference type="ChEBI" id="CHEBI:78566"/>
    </reaction>
    <physiologicalReaction direction="left-to-right" evidence="3">
        <dbReference type="Rhea" id="RHEA:37712"/>
    </physiologicalReaction>
</comment>
<comment type="catalytic activity">
    <reaction evidence="3">
        <text>1-O-octadecyl-sn-glycero-3-phosphocholine + (5Z,8Z,11Z,14Z)-eicosatetraenoyl-CoA = 1-O-octadecyl-2-(5Z,8Z,11Z,14Z)-eicosatetraenoyl-sn-glycero-3-phosphocholine + CoA</text>
        <dbReference type="Rhea" id="RHEA:37747"/>
        <dbReference type="ChEBI" id="CHEBI:57287"/>
        <dbReference type="ChEBI" id="CHEBI:57368"/>
        <dbReference type="ChEBI" id="CHEBI:75216"/>
        <dbReference type="ChEBI" id="CHEBI:75245"/>
    </reaction>
    <physiologicalReaction direction="left-to-right" evidence="3">
        <dbReference type="Rhea" id="RHEA:37748"/>
    </physiologicalReaction>
</comment>
<comment type="pathway">
    <text>Lipid metabolism; phospholipid metabolism.</text>
</comment>
<comment type="subcellular location">
    <subcellularLocation>
        <location evidence="2">Endoplasmic reticulum membrane</location>
        <topology evidence="2">Single-pass type II membrane protein</topology>
    </subcellularLocation>
    <subcellularLocation>
        <location evidence="3">Golgi apparatus membrane</location>
        <topology evidence="2">Single-pass type II membrane protein</topology>
    </subcellularLocation>
    <subcellularLocation>
        <location evidence="3">Cell membrane</location>
        <topology evidence="2">Single-pass type II membrane protein</topology>
    </subcellularLocation>
    <subcellularLocation>
        <location evidence="2">Lipid droplet</location>
    </subcellularLocation>
</comment>
<comment type="domain">
    <text evidence="1">The HXXXXD motif is essential for acyltransferase activity.</text>
</comment>
<comment type="similarity">
    <text evidence="8">Belongs to the 1-acyl-sn-glycerol-3-phosphate acyltransferase family.</text>
</comment>
<protein>
    <recommendedName>
        <fullName>Lysophosphatidylcholine acyltransferase 2</fullName>
        <shortName>LPC acyltransferase 2</shortName>
        <shortName>LPCAT-2</shortName>
        <shortName>LysoPC acyltransferase 2</shortName>
        <ecNumber evidence="2">2.3.1.23</ecNumber>
    </recommendedName>
    <alternativeName>
        <fullName>1-acylglycerol-3-phosphate O-acyltransferase 11</fullName>
        <shortName>1-AGP acyltransferase 11</shortName>
        <shortName>1-AGPAT 11</shortName>
        <ecNumber evidence="2">2.3.1.51</ecNumber>
    </alternativeName>
    <alternativeName>
        <fullName>1-acylglycerophosphocholine O-acyltransferase</fullName>
    </alternativeName>
    <alternativeName>
        <fullName>1-alkenylglycerophosphocholine O-acyltransferase</fullName>
        <ecNumber evidence="3">2.3.1.25</ecNumber>
    </alternativeName>
    <alternativeName>
        <fullName>1-alkylglycerophosphocholine O-acetyltransferase</fullName>
        <ecNumber evidence="3">2.3.1.67</ecNumber>
    </alternativeName>
    <alternativeName>
        <fullName>Acetyl-CoA:lyso-platelet-activating factor acetyltransferase</fullName>
        <shortName>Acetyl-CoA:lyso-PAF acetyltransferase</shortName>
        <shortName>Lyso-PAF acetyltransferase</shortName>
        <shortName>LysoPAFAT</shortName>
    </alternativeName>
    <alternativeName>
        <fullName>Acyltransferase-like 1</fullName>
    </alternativeName>
</protein>
<feature type="chain" id="PRO_0000247060" description="Lysophosphatidylcholine acyltransferase 2">
    <location>
        <begin position="1"/>
        <end position="544"/>
    </location>
</feature>
<feature type="topological domain" description="Cytoplasmic" evidence="5">
    <location>
        <begin position="1"/>
        <end position="58"/>
    </location>
</feature>
<feature type="transmembrane region" description="Helical; Signal-anchor for type II membrane protein" evidence="5">
    <location>
        <begin position="59"/>
        <end position="79"/>
    </location>
</feature>
<feature type="topological domain" description="Lumenal" evidence="5">
    <location>
        <begin position="80"/>
        <end position="544"/>
    </location>
</feature>
<feature type="domain" description="EF-hand 1" evidence="6">
    <location>
        <begin position="391"/>
        <end position="426"/>
    </location>
</feature>
<feature type="domain" description="EF-hand 2" evidence="6">
    <location>
        <begin position="428"/>
        <end position="463"/>
    </location>
</feature>
<feature type="region of interest" description="Disordered" evidence="7">
    <location>
        <begin position="520"/>
        <end position="544"/>
    </location>
</feature>
<feature type="short sequence motif" description="HXXXXD motif" evidence="1">
    <location>
        <begin position="146"/>
        <end position="151"/>
    </location>
</feature>
<feature type="short sequence motif" description="EGTC motif">
    <location>
        <begin position="220"/>
        <end position="223"/>
    </location>
</feature>
<feature type="compositionally biased region" description="Polar residues" evidence="7">
    <location>
        <begin position="520"/>
        <end position="530"/>
    </location>
</feature>
<feature type="compositionally biased region" description="Basic and acidic residues" evidence="7">
    <location>
        <begin position="531"/>
        <end position="544"/>
    </location>
</feature>
<feature type="binding site" evidence="6">
    <location>
        <position position="404"/>
    </location>
    <ligand>
        <name>Ca(2+)</name>
        <dbReference type="ChEBI" id="CHEBI:29108"/>
        <label>1</label>
    </ligand>
</feature>
<feature type="binding site" evidence="6">
    <location>
        <position position="406"/>
    </location>
    <ligand>
        <name>Ca(2+)</name>
        <dbReference type="ChEBI" id="CHEBI:29108"/>
        <label>1</label>
    </ligand>
</feature>
<feature type="binding site" evidence="6">
    <location>
        <position position="408"/>
    </location>
    <ligand>
        <name>Ca(2+)</name>
        <dbReference type="ChEBI" id="CHEBI:29108"/>
        <label>1</label>
    </ligand>
</feature>
<feature type="binding site" evidence="6">
    <location>
        <position position="410"/>
    </location>
    <ligand>
        <name>Ca(2+)</name>
        <dbReference type="ChEBI" id="CHEBI:29108"/>
        <label>1</label>
    </ligand>
</feature>
<feature type="binding site" evidence="6">
    <location>
        <position position="415"/>
    </location>
    <ligand>
        <name>Ca(2+)</name>
        <dbReference type="ChEBI" id="CHEBI:29108"/>
        <label>1</label>
    </ligand>
</feature>
<feature type="binding site" evidence="6">
    <location>
        <position position="441"/>
    </location>
    <ligand>
        <name>Ca(2+)</name>
        <dbReference type="ChEBI" id="CHEBI:29108"/>
        <label>2</label>
    </ligand>
</feature>
<feature type="binding site" evidence="6">
    <location>
        <position position="443"/>
    </location>
    <ligand>
        <name>Ca(2+)</name>
        <dbReference type="ChEBI" id="CHEBI:29108"/>
        <label>2</label>
    </ligand>
</feature>
<feature type="binding site" evidence="6">
    <location>
        <position position="445"/>
    </location>
    <ligand>
        <name>Ca(2+)</name>
        <dbReference type="ChEBI" id="CHEBI:29108"/>
        <label>2</label>
    </ligand>
</feature>
<feature type="binding site" evidence="6">
    <location>
        <position position="447"/>
    </location>
    <ligand>
        <name>Ca(2+)</name>
        <dbReference type="ChEBI" id="CHEBI:29108"/>
        <label>2</label>
    </ligand>
</feature>
<feature type="binding site" evidence="6">
    <location>
        <position position="452"/>
    </location>
    <ligand>
        <name>Ca(2+)</name>
        <dbReference type="ChEBI" id="CHEBI:29108"/>
        <label>2</label>
    </ligand>
</feature>
<organism>
    <name type="scientific">Rattus norvegicus</name>
    <name type="common">Rat</name>
    <dbReference type="NCBI Taxonomy" id="10116"/>
    <lineage>
        <taxon>Eukaryota</taxon>
        <taxon>Metazoa</taxon>
        <taxon>Chordata</taxon>
        <taxon>Craniata</taxon>
        <taxon>Vertebrata</taxon>
        <taxon>Euteleostomi</taxon>
        <taxon>Mammalia</taxon>
        <taxon>Eutheria</taxon>
        <taxon>Euarchontoglires</taxon>
        <taxon>Glires</taxon>
        <taxon>Rodentia</taxon>
        <taxon>Myomorpha</taxon>
        <taxon>Muroidea</taxon>
        <taxon>Muridae</taxon>
        <taxon>Murinae</taxon>
        <taxon>Rattus</taxon>
    </lineage>
</organism>
<reference key="1">
    <citation type="journal article" date="2004" name="Nature">
        <title>Genome sequence of the Brown Norway rat yields insights into mammalian evolution.</title>
        <authorList>
            <person name="Gibbs R.A."/>
            <person name="Weinstock G.M."/>
            <person name="Metzker M.L."/>
            <person name="Muzny D.M."/>
            <person name="Sodergren E.J."/>
            <person name="Scherer S."/>
            <person name="Scott G."/>
            <person name="Steffen D."/>
            <person name="Worley K.C."/>
            <person name="Burch P.E."/>
            <person name="Okwuonu G."/>
            <person name="Hines S."/>
            <person name="Lewis L."/>
            <person name="Deramo C."/>
            <person name="Delgado O."/>
            <person name="Dugan-Rocha S."/>
            <person name="Miner G."/>
            <person name="Morgan M."/>
            <person name="Hawes A."/>
            <person name="Gill R."/>
            <person name="Holt R.A."/>
            <person name="Adams M.D."/>
            <person name="Amanatides P.G."/>
            <person name="Baden-Tillson H."/>
            <person name="Barnstead M."/>
            <person name="Chin S."/>
            <person name="Evans C.A."/>
            <person name="Ferriera S."/>
            <person name="Fosler C."/>
            <person name="Glodek A."/>
            <person name="Gu Z."/>
            <person name="Jennings D."/>
            <person name="Kraft C.L."/>
            <person name="Nguyen T."/>
            <person name="Pfannkoch C.M."/>
            <person name="Sitter C."/>
            <person name="Sutton G.G."/>
            <person name="Venter J.C."/>
            <person name="Woodage T."/>
            <person name="Smith D."/>
            <person name="Lee H.-M."/>
            <person name="Gustafson E."/>
            <person name="Cahill P."/>
            <person name="Kana A."/>
            <person name="Doucette-Stamm L."/>
            <person name="Weinstock K."/>
            <person name="Fechtel K."/>
            <person name="Weiss R.B."/>
            <person name="Dunn D.M."/>
            <person name="Green E.D."/>
            <person name="Blakesley R.W."/>
            <person name="Bouffard G.G."/>
            <person name="De Jong P.J."/>
            <person name="Osoegawa K."/>
            <person name="Zhu B."/>
            <person name="Marra M."/>
            <person name="Schein J."/>
            <person name="Bosdet I."/>
            <person name="Fjell C."/>
            <person name="Jones S."/>
            <person name="Krzywinski M."/>
            <person name="Mathewson C."/>
            <person name="Siddiqui A."/>
            <person name="Wye N."/>
            <person name="McPherson J."/>
            <person name="Zhao S."/>
            <person name="Fraser C.M."/>
            <person name="Shetty J."/>
            <person name="Shatsman S."/>
            <person name="Geer K."/>
            <person name="Chen Y."/>
            <person name="Abramzon S."/>
            <person name="Nierman W.C."/>
            <person name="Havlak P.H."/>
            <person name="Chen R."/>
            <person name="Durbin K.J."/>
            <person name="Egan A."/>
            <person name="Ren Y."/>
            <person name="Song X.-Z."/>
            <person name="Li B."/>
            <person name="Liu Y."/>
            <person name="Qin X."/>
            <person name="Cawley S."/>
            <person name="Cooney A.J."/>
            <person name="D'Souza L.M."/>
            <person name="Martin K."/>
            <person name="Wu J.Q."/>
            <person name="Gonzalez-Garay M.L."/>
            <person name="Jackson A.R."/>
            <person name="Kalafus K.J."/>
            <person name="McLeod M.P."/>
            <person name="Milosavljevic A."/>
            <person name="Virk D."/>
            <person name="Volkov A."/>
            <person name="Wheeler D.A."/>
            <person name="Zhang Z."/>
            <person name="Bailey J.A."/>
            <person name="Eichler E.E."/>
            <person name="Tuzun E."/>
            <person name="Birney E."/>
            <person name="Mongin E."/>
            <person name="Ureta-Vidal A."/>
            <person name="Woodwark C."/>
            <person name="Zdobnov E."/>
            <person name="Bork P."/>
            <person name="Suyama M."/>
            <person name="Torrents D."/>
            <person name="Alexandersson M."/>
            <person name="Trask B.J."/>
            <person name="Young J.M."/>
            <person name="Huang H."/>
            <person name="Wang H."/>
            <person name="Xing H."/>
            <person name="Daniels S."/>
            <person name="Gietzen D."/>
            <person name="Schmidt J."/>
            <person name="Stevens K."/>
            <person name="Vitt U."/>
            <person name="Wingrove J."/>
            <person name="Camara F."/>
            <person name="Mar Alba M."/>
            <person name="Abril J.F."/>
            <person name="Guigo R."/>
            <person name="Smit A."/>
            <person name="Dubchak I."/>
            <person name="Rubin E.M."/>
            <person name="Couronne O."/>
            <person name="Poliakov A."/>
            <person name="Huebner N."/>
            <person name="Ganten D."/>
            <person name="Goesele C."/>
            <person name="Hummel O."/>
            <person name="Kreitler T."/>
            <person name="Lee Y.-A."/>
            <person name="Monti J."/>
            <person name="Schulz H."/>
            <person name="Zimdahl H."/>
            <person name="Himmelbauer H."/>
            <person name="Lehrach H."/>
            <person name="Jacob H.J."/>
            <person name="Bromberg S."/>
            <person name="Gullings-Handley J."/>
            <person name="Jensen-Seaman M.I."/>
            <person name="Kwitek A.E."/>
            <person name="Lazar J."/>
            <person name="Pasko D."/>
            <person name="Tonellato P.J."/>
            <person name="Twigger S."/>
            <person name="Ponting C.P."/>
            <person name="Duarte J.M."/>
            <person name="Rice S."/>
            <person name="Goodstadt L."/>
            <person name="Beatson S.A."/>
            <person name="Emes R.D."/>
            <person name="Winter E.E."/>
            <person name="Webber C."/>
            <person name="Brandt P."/>
            <person name="Nyakatura G."/>
            <person name="Adetobi M."/>
            <person name="Chiaromonte F."/>
            <person name="Elnitski L."/>
            <person name="Eswara P."/>
            <person name="Hardison R.C."/>
            <person name="Hou M."/>
            <person name="Kolbe D."/>
            <person name="Makova K."/>
            <person name="Miller W."/>
            <person name="Nekrutenko A."/>
            <person name="Riemer C."/>
            <person name="Schwartz S."/>
            <person name="Taylor J."/>
            <person name="Yang S."/>
            <person name="Zhang Y."/>
            <person name="Lindpaintner K."/>
            <person name="Andrews T.D."/>
            <person name="Caccamo M."/>
            <person name="Clamp M."/>
            <person name="Clarke L."/>
            <person name="Curwen V."/>
            <person name="Durbin R.M."/>
            <person name="Eyras E."/>
            <person name="Searle S.M."/>
            <person name="Cooper G.M."/>
            <person name="Batzoglou S."/>
            <person name="Brudno M."/>
            <person name="Sidow A."/>
            <person name="Stone E.A."/>
            <person name="Payseur B.A."/>
            <person name="Bourque G."/>
            <person name="Lopez-Otin C."/>
            <person name="Puente X.S."/>
            <person name="Chakrabarti K."/>
            <person name="Chatterji S."/>
            <person name="Dewey C."/>
            <person name="Pachter L."/>
            <person name="Bray N."/>
            <person name="Yap V.B."/>
            <person name="Caspi A."/>
            <person name="Tesler G."/>
            <person name="Pevzner P.A."/>
            <person name="Haussler D."/>
            <person name="Roskin K.M."/>
            <person name="Baertsch R."/>
            <person name="Clawson H."/>
            <person name="Furey T.S."/>
            <person name="Hinrichs A.S."/>
            <person name="Karolchik D."/>
            <person name="Kent W.J."/>
            <person name="Rosenbloom K.R."/>
            <person name="Trumbower H."/>
            <person name="Weirauch M."/>
            <person name="Cooper D.N."/>
            <person name="Stenson P.D."/>
            <person name="Ma B."/>
            <person name="Brent M."/>
            <person name="Arumugam M."/>
            <person name="Shteynberg D."/>
            <person name="Copley R.R."/>
            <person name="Taylor M.S."/>
            <person name="Riethman H."/>
            <person name="Mudunuri U."/>
            <person name="Peterson J."/>
            <person name="Guyer M."/>
            <person name="Felsenfeld A."/>
            <person name="Old S."/>
            <person name="Mockrin S."/>
            <person name="Collins F.S."/>
        </authorList>
    </citation>
    <scope>NUCLEOTIDE SEQUENCE [LARGE SCALE GENOMIC DNA]</scope>
    <source>
        <strain>Brown Norway</strain>
    </source>
</reference>
<name>PCAT2_RAT</name>
<accession>P0C1Q3</accession>
<dbReference type="EC" id="2.3.1.23" evidence="2"/>
<dbReference type="EC" id="2.3.1.51" evidence="2"/>
<dbReference type="EC" id="2.3.1.25" evidence="3"/>
<dbReference type="EC" id="2.3.1.67" evidence="3"/>
<dbReference type="EMBL" id="AABR03113567">
    <property type="status" value="NOT_ANNOTATED_CDS"/>
    <property type="molecule type" value="Genomic_DNA"/>
</dbReference>
<dbReference type="EMBL" id="AABR03114401">
    <property type="status" value="NOT_ANNOTATED_CDS"/>
    <property type="molecule type" value="Genomic_DNA"/>
</dbReference>
<dbReference type="EMBL" id="AABR03114727">
    <property type="status" value="NOT_ANNOTATED_CDS"/>
    <property type="molecule type" value="Genomic_DNA"/>
</dbReference>
<dbReference type="EMBL" id="AABR03115009">
    <property type="status" value="NOT_ANNOTATED_CDS"/>
    <property type="molecule type" value="Genomic_DNA"/>
</dbReference>
<dbReference type="EMBL" id="AABR03115067">
    <property type="status" value="NOT_ANNOTATED_CDS"/>
    <property type="molecule type" value="Genomic_DNA"/>
</dbReference>
<dbReference type="EMBL" id="AABR03115529">
    <property type="status" value="NOT_ANNOTATED_CDS"/>
    <property type="molecule type" value="Genomic_DNA"/>
</dbReference>
<dbReference type="SMR" id="P0C1Q3"/>
<dbReference type="FunCoup" id="P0C1Q3">
    <property type="interactions" value="1758"/>
</dbReference>
<dbReference type="STRING" id="10116.ENSRNOP00000022359"/>
<dbReference type="PhosphoSitePlus" id="P0C1Q3"/>
<dbReference type="jPOST" id="P0C1Q3"/>
<dbReference type="PaxDb" id="10116-ENSRNOP00000022359"/>
<dbReference type="AGR" id="RGD:2325051"/>
<dbReference type="RGD" id="2325051">
    <property type="gene designation" value="Lpcat2"/>
</dbReference>
<dbReference type="eggNOG" id="KOG4666">
    <property type="taxonomic scope" value="Eukaryota"/>
</dbReference>
<dbReference type="InParanoid" id="P0C1Q3"/>
<dbReference type="PhylomeDB" id="P0C1Q3"/>
<dbReference type="Reactome" id="R-RNO-1482788">
    <property type="pathway name" value="Acyl chain remodelling of PC"/>
</dbReference>
<dbReference type="UniPathway" id="UPA00085"/>
<dbReference type="PRO" id="PR:P0C1Q3"/>
<dbReference type="Proteomes" id="UP000002494">
    <property type="component" value="Unplaced"/>
</dbReference>
<dbReference type="GO" id="GO:0005783">
    <property type="term" value="C:endoplasmic reticulum"/>
    <property type="evidence" value="ECO:0000250"/>
    <property type="project" value="UniProtKB"/>
</dbReference>
<dbReference type="GO" id="GO:0005789">
    <property type="term" value="C:endoplasmic reticulum membrane"/>
    <property type="evidence" value="ECO:0000250"/>
    <property type="project" value="UniProtKB"/>
</dbReference>
<dbReference type="GO" id="GO:0000139">
    <property type="term" value="C:Golgi membrane"/>
    <property type="evidence" value="ECO:0007669"/>
    <property type="project" value="UniProtKB-SubCell"/>
</dbReference>
<dbReference type="GO" id="GO:0005795">
    <property type="term" value="C:Golgi stack"/>
    <property type="evidence" value="ECO:0000250"/>
    <property type="project" value="UniProtKB"/>
</dbReference>
<dbReference type="GO" id="GO:0005811">
    <property type="term" value="C:lipid droplet"/>
    <property type="evidence" value="ECO:0000266"/>
    <property type="project" value="RGD"/>
</dbReference>
<dbReference type="GO" id="GO:0016020">
    <property type="term" value="C:membrane"/>
    <property type="evidence" value="ECO:0000266"/>
    <property type="project" value="RGD"/>
</dbReference>
<dbReference type="GO" id="GO:0005886">
    <property type="term" value="C:plasma membrane"/>
    <property type="evidence" value="ECO:0007669"/>
    <property type="project" value="UniProtKB-SubCell"/>
</dbReference>
<dbReference type="GO" id="GO:0003841">
    <property type="term" value="F:1-acylglycerol-3-phosphate O-acyltransferase activity"/>
    <property type="evidence" value="ECO:0000250"/>
    <property type="project" value="UniProtKB"/>
</dbReference>
<dbReference type="GO" id="GO:0047184">
    <property type="term" value="F:1-acylglycerophosphocholine O-acyltransferase activity"/>
    <property type="evidence" value="ECO:0000250"/>
    <property type="project" value="UniProtKB"/>
</dbReference>
<dbReference type="GO" id="GO:0047192">
    <property type="term" value="F:1-alkylglycerophosphocholine O-acetyltransferase activity"/>
    <property type="evidence" value="ECO:0000250"/>
    <property type="project" value="UniProtKB"/>
</dbReference>
<dbReference type="GO" id="GO:0005509">
    <property type="term" value="F:calcium ion binding"/>
    <property type="evidence" value="ECO:0007669"/>
    <property type="project" value="InterPro"/>
</dbReference>
<dbReference type="GO" id="GO:0042171">
    <property type="term" value="F:lysophosphatidic acid acyltransferase activity"/>
    <property type="evidence" value="ECO:0000318"/>
    <property type="project" value="GO_Central"/>
</dbReference>
<dbReference type="GO" id="GO:0047159">
    <property type="term" value="F:plasmalogen synthase activity"/>
    <property type="evidence" value="ECO:0007669"/>
    <property type="project" value="UniProtKB-EC"/>
</dbReference>
<dbReference type="GO" id="GO:0061024">
    <property type="term" value="P:membrane organization"/>
    <property type="evidence" value="ECO:0000250"/>
    <property type="project" value="UniProtKB"/>
</dbReference>
<dbReference type="GO" id="GO:0036151">
    <property type="term" value="P:phosphatidylcholine acyl-chain remodeling"/>
    <property type="evidence" value="ECO:0000266"/>
    <property type="project" value="RGD"/>
</dbReference>
<dbReference type="GO" id="GO:0006663">
    <property type="term" value="P:platelet activating factor biosynthetic process"/>
    <property type="evidence" value="ECO:0000250"/>
    <property type="project" value="UniProtKB"/>
</dbReference>
<dbReference type="CDD" id="cd00051">
    <property type="entry name" value="EFh"/>
    <property type="match status" value="2"/>
</dbReference>
<dbReference type="CDD" id="cd07991">
    <property type="entry name" value="LPLAT_LPCAT1-like"/>
    <property type="match status" value="1"/>
</dbReference>
<dbReference type="Gene3D" id="1.10.238.10">
    <property type="entry name" value="EF-hand"/>
    <property type="match status" value="1"/>
</dbReference>
<dbReference type="InterPro" id="IPR011992">
    <property type="entry name" value="EF-hand-dom_pair"/>
</dbReference>
<dbReference type="InterPro" id="IPR018247">
    <property type="entry name" value="EF_Hand_1_Ca_BS"/>
</dbReference>
<dbReference type="InterPro" id="IPR002048">
    <property type="entry name" value="EF_hand_dom"/>
</dbReference>
<dbReference type="InterPro" id="IPR045252">
    <property type="entry name" value="LPCAT1-like"/>
</dbReference>
<dbReference type="InterPro" id="IPR002123">
    <property type="entry name" value="Plipid/glycerol_acylTrfase"/>
</dbReference>
<dbReference type="PANTHER" id="PTHR23063:SF21">
    <property type="entry name" value="LYSOPHOSPHATIDYLCHOLINE ACYLTRANSFERASE 2"/>
    <property type="match status" value="1"/>
</dbReference>
<dbReference type="PANTHER" id="PTHR23063">
    <property type="entry name" value="PHOSPHOLIPID ACYLTRANSFERASE"/>
    <property type="match status" value="1"/>
</dbReference>
<dbReference type="Pfam" id="PF01553">
    <property type="entry name" value="Acyltransferase"/>
    <property type="match status" value="1"/>
</dbReference>
<dbReference type="Pfam" id="PF13499">
    <property type="entry name" value="EF-hand_7"/>
    <property type="match status" value="1"/>
</dbReference>
<dbReference type="PRINTS" id="PR00450">
    <property type="entry name" value="RECOVERIN"/>
</dbReference>
<dbReference type="SMART" id="SM00054">
    <property type="entry name" value="EFh"/>
    <property type="match status" value="2"/>
</dbReference>
<dbReference type="SMART" id="SM00563">
    <property type="entry name" value="PlsC"/>
    <property type="match status" value="1"/>
</dbReference>
<dbReference type="SUPFAM" id="SSF47473">
    <property type="entry name" value="EF-hand"/>
    <property type="match status" value="1"/>
</dbReference>
<dbReference type="SUPFAM" id="SSF69593">
    <property type="entry name" value="Glycerol-3-phosphate (1)-acyltransferase"/>
    <property type="match status" value="1"/>
</dbReference>
<dbReference type="PROSITE" id="PS00018">
    <property type="entry name" value="EF_HAND_1"/>
    <property type="match status" value="2"/>
</dbReference>
<dbReference type="PROSITE" id="PS50222">
    <property type="entry name" value="EF_HAND_2"/>
    <property type="match status" value="2"/>
</dbReference>
<keyword id="KW-0012">Acyltransferase</keyword>
<keyword id="KW-0106">Calcium</keyword>
<keyword id="KW-1003">Cell membrane</keyword>
<keyword id="KW-0256">Endoplasmic reticulum</keyword>
<keyword id="KW-0333">Golgi apparatus</keyword>
<keyword id="KW-0444">Lipid biosynthesis</keyword>
<keyword id="KW-0551">Lipid droplet</keyword>
<keyword id="KW-0443">Lipid metabolism</keyword>
<keyword id="KW-0472">Membrane</keyword>
<keyword id="KW-0479">Metal-binding</keyword>
<keyword id="KW-0594">Phospholipid biosynthesis</keyword>
<keyword id="KW-1208">Phospholipid metabolism</keyword>
<keyword id="KW-1185">Reference proteome</keyword>
<keyword id="KW-0677">Repeat</keyword>
<keyword id="KW-0735">Signal-anchor</keyword>
<keyword id="KW-0808">Transferase</keyword>
<keyword id="KW-0812">Transmembrane</keyword>
<keyword id="KW-1133">Transmembrane helix</keyword>
<proteinExistence type="inferred from homology"/>
<sequence length="544" mass="59829">MNRCAEAAAVAATVPGSGVGDSGLRPPMVPRQASFFPPPVPNPFVQQTRISAARRLQMILLGIILLPVRALLVGLVLLLAWPFAVISTVCCPKKLTHPISDWRRKITQPALKFLGRAMFFSMGFRVTVKGKVASPLEAPIFVVAPHSTFFDGIACVVAGLPSLVSRNENAQTPLVGRLLRALQPVLVSRVDPDSRKNTINEIKKRAMSGGEWPQILVFPEGTCTNRSCLITFKPGAFIPGVPVQPVLLRYPNKLDTVTWTWQGYTFIQLCVLTFCQLFTKVEVEFMPVQAPSEEERNDPVLFASRVRNLMAEALEIPVTDHTYEDCRLMISAGQLTLPMEAGLVEFTKISRKLKLDWDGIRKHLDEYASIASSAKGGRIGASSAKGGRIGPVSDVLRQLFALFDRNNDGSIDFREYVIGLAVLCNPANTEDIIQVAFKLFDVDEDGYITEEEFCTILQASLGVPDLNVSGLFREIAQGDSVSYEEFKSFALKHPEYAKIFTTYLDLQTCHVFSLPEDVQTAPSVASNKVSPESHEEGTSGKKVD</sequence>
<evidence type="ECO:0000250" key="1">
    <source>
        <dbReference type="UniProtKB" id="Q3TFD2"/>
    </source>
</evidence>
<evidence type="ECO:0000250" key="2">
    <source>
        <dbReference type="UniProtKB" id="Q7L5N7"/>
    </source>
</evidence>
<evidence type="ECO:0000250" key="3">
    <source>
        <dbReference type="UniProtKB" id="Q8BYI6"/>
    </source>
</evidence>
<evidence type="ECO:0000250" key="4">
    <source>
        <dbReference type="UniProtKB" id="Q8NF37"/>
    </source>
</evidence>
<evidence type="ECO:0000255" key="5"/>
<evidence type="ECO:0000255" key="6">
    <source>
        <dbReference type="PROSITE-ProRule" id="PRU00448"/>
    </source>
</evidence>
<evidence type="ECO:0000256" key="7">
    <source>
        <dbReference type="SAM" id="MobiDB-lite"/>
    </source>
</evidence>
<evidence type="ECO:0000305" key="8"/>